<organism>
    <name type="scientific">Gallus gallus</name>
    <name type="common">Chicken</name>
    <dbReference type="NCBI Taxonomy" id="9031"/>
    <lineage>
        <taxon>Eukaryota</taxon>
        <taxon>Metazoa</taxon>
        <taxon>Chordata</taxon>
        <taxon>Craniata</taxon>
        <taxon>Vertebrata</taxon>
        <taxon>Euteleostomi</taxon>
        <taxon>Archelosauria</taxon>
        <taxon>Archosauria</taxon>
        <taxon>Dinosauria</taxon>
        <taxon>Saurischia</taxon>
        <taxon>Theropoda</taxon>
        <taxon>Coelurosauria</taxon>
        <taxon>Aves</taxon>
        <taxon>Neognathae</taxon>
        <taxon>Galloanserae</taxon>
        <taxon>Galliformes</taxon>
        <taxon>Phasianidae</taxon>
        <taxon>Phasianinae</taxon>
        <taxon>Gallus</taxon>
    </lineage>
</organism>
<sequence>MDLLFGRRKTPEELLRQNQRALTRAMRELDRERQKLEAQEKKIIIDIKKMAKQGQMDAVKIMAKDLVRTRRYVKKFITMRANVQAVSLKIQTLKSNNSMALAMKGVTKAMATMNRQLKLPQIQKIMMEFEKQAGIMDMKEELMNDAIDDAMGDEDDEEESDAVVSQVLDELGLNLTDELATLPPPGGSLAAGEGRAAEAAAALADADADLEERLKNLRRD</sequence>
<accession>Q5ZHN1</accession>
<feature type="chain" id="PRO_0000211464" description="Charged multivesicular body protein 2a">
    <location>
        <begin position="1"/>
        <end position="220"/>
    </location>
</feature>
<feature type="coiled-coil region" evidence="2">
    <location>
        <begin position="12"/>
        <end position="52"/>
    </location>
</feature>
<feature type="coiled-coil region" evidence="2">
    <location>
        <begin position="195"/>
        <end position="220"/>
    </location>
</feature>
<feature type="short sequence motif" description="MIT-interacting motif" evidence="1">
    <location>
        <begin position="208"/>
        <end position="218"/>
    </location>
</feature>
<feature type="modified residue" description="N-acetylmethionine" evidence="1">
    <location>
        <position position="1"/>
    </location>
</feature>
<comment type="function">
    <text evidence="1">Probable core component of the endosomal sorting required for transport complex III (ESCRT-III) which is involved in multivesicular bodies (MVBs) formation and sorting of endosomal cargo proteins into MVBs. MVBs contain intraluminal vesicles (ILVs) that are generated by invagination and scission from the limiting membrane of the endosome and mostly are delivered to lysosomes enabling degradation of membrane proteins, such as stimulated growth factor receptors, lysosomal enzymes and lipids (By similarity).</text>
</comment>
<comment type="subunit">
    <text evidence="1">Probable core component of the endosomal sorting required for transport complex III (ESCRT-III). ESCRT-III components are thought to multimerize to form a flat lattice on the perimeter membrane of the endosome (By similarity).</text>
</comment>
<comment type="subcellular location">
    <subcellularLocation>
        <location evidence="1">Late endosome membrane</location>
        <topology evidence="1">Peripheral membrane protein</topology>
        <orientation evidence="1">Cytoplasmic side</orientation>
    </subcellularLocation>
    <subcellularLocation>
        <location evidence="1">Cytoplasm</location>
    </subcellularLocation>
</comment>
<comment type="similarity">
    <text evidence="3">Belongs to the SNF7 family.</text>
</comment>
<dbReference type="EMBL" id="AJ721103">
    <property type="protein sequence ID" value="CAG32762.1"/>
    <property type="molecule type" value="mRNA"/>
</dbReference>
<dbReference type="RefSeq" id="NP_001074361.1">
    <property type="nucleotide sequence ID" value="NM_001080892.1"/>
</dbReference>
<dbReference type="SMR" id="Q5ZHN1"/>
<dbReference type="FunCoup" id="Q5ZHN1">
    <property type="interactions" value="2775"/>
</dbReference>
<dbReference type="STRING" id="9031.ENSGALP00000050613"/>
<dbReference type="PaxDb" id="9031-ENSGALP00000043054"/>
<dbReference type="GeneID" id="776036"/>
<dbReference type="KEGG" id="gga:776036"/>
<dbReference type="CTD" id="27243"/>
<dbReference type="VEuPathDB" id="HostDB:geneid_776036"/>
<dbReference type="eggNOG" id="KOG3230">
    <property type="taxonomic scope" value="Eukaryota"/>
</dbReference>
<dbReference type="InParanoid" id="Q5ZHN1"/>
<dbReference type="OrthoDB" id="10252926at2759"/>
<dbReference type="PhylomeDB" id="Q5ZHN1"/>
<dbReference type="PRO" id="PR:Q5ZHN1"/>
<dbReference type="Proteomes" id="UP000000539">
    <property type="component" value="Unassembled WGS sequence"/>
</dbReference>
<dbReference type="GO" id="GO:0000815">
    <property type="term" value="C:ESCRT III complex"/>
    <property type="evidence" value="ECO:0000318"/>
    <property type="project" value="GO_Central"/>
</dbReference>
<dbReference type="GO" id="GO:0031902">
    <property type="term" value="C:late endosome membrane"/>
    <property type="evidence" value="ECO:0007669"/>
    <property type="project" value="UniProtKB-SubCell"/>
</dbReference>
<dbReference type="GO" id="GO:0005771">
    <property type="term" value="C:multivesicular body"/>
    <property type="evidence" value="ECO:0000318"/>
    <property type="project" value="GO_Central"/>
</dbReference>
<dbReference type="GO" id="GO:0005635">
    <property type="term" value="C:nuclear envelope"/>
    <property type="evidence" value="ECO:0000250"/>
    <property type="project" value="UniProtKB"/>
</dbReference>
<dbReference type="GO" id="GO:0032509">
    <property type="term" value="P:endosome transport via multivesicular body sorting pathway"/>
    <property type="evidence" value="ECO:0000318"/>
    <property type="project" value="GO_Central"/>
</dbReference>
<dbReference type="GO" id="GO:0010458">
    <property type="term" value="P:exit from mitosis"/>
    <property type="evidence" value="ECO:0000250"/>
    <property type="project" value="UniProtKB"/>
</dbReference>
<dbReference type="GO" id="GO:0045324">
    <property type="term" value="P:late endosome to vacuole transport"/>
    <property type="evidence" value="ECO:0000318"/>
    <property type="project" value="GO_Central"/>
</dbReference>
<dbReference type="GO" id="GO:0031468">
    <property type="term" value="P:nuclear membrane reassembly"/>
    <property type="evidence" value="ECO:0000250"/>
    <property type="project" value="UniProtKB"/>
</dbReference>
<dbReference type="GO" id="GO:0015031">
    <property type="term" value="P:protein transport"/>
    <property type="evidence" value="ECO:0000318"/>
    <property type="project" value="GO_Central"/>
</dbReference>
<dbReference type="Gene3D" id="6.10.140.1230">
    <property type="match status" value="1"/>
</dbReference>
<dbReference type="InterPro" id="IPR005024">
    <property type="entry name" value="Snf7_fam"/>
</dbReference>
<dbReference type="PANTHER" id="PTHR10476">
    <property type="entry name" value="CHARGED MULTIVESICULAR BODY PROTEIN"/>
    <property type="match status" value="1"/>
</dbReference>
<dbReference type="Pfam" id="PF03357">
    <property type="entry name" value="Snf7"/>
    <property type="match status" value="1"/>
</dbReference>
<proteinExistence type="evidence at transcript level"/>
<gene>
    <name type="primary">CHMP2A</name>
    <name type="ORF">RCJMB04_35d23</name>
</gene>
<evidence type="ECO:0000250" key="1"/>
<evidence type="ECO:0000255" key="2"/>
<evidence type="ECO:0000305" key="3"/>
<reference key="1">
    <citation type="journal article" date="2005" name="Genome Biol.">
        <title>Full-length cDNAs from chicken bursal lymphocytes to facilitate gene function analysis.</title>
        <authorList>
            <person name="Caldwell R.B."/>
            <person name="Kierzek A.M."/>
            <person name="Arakawa H."/>
            <person name="Bezzubov Y."/>
            <person name="Zaim J."/>
            <person name="Fiedler P."/>
            <person name="Kutter S."/>
            <person name="Blagodatski A."/>
            <person name="Kostovska D."/>
            <person name="Koter M."/>
            <person name="Plachy J."/>
            <person name="Carninci P."/>
            <person name="Hayashizaki Y."/>
            <person name="Buerstedde J.-M."/>
        </authorList>
    </citation>
    <scope>NUCLEOTIDE SEQUENCE [LARGE SCALE MRNA]</scope>
    <source>
        <strain>CB</strain>
        <tissue>Bursa of Fabricius</tissue>
    </source>
</reference>
<protein>
    <recommendedName>
        <fullName>Charged multivesicular body protein 2a</fullName>
    </recommendedName>
    <alternativeName>
        <fullName>Chromatin-modifying protein 2a</fullName>
        <shortName>CHMP2a</shortName>
    </alternativeName>
</protein>
<name>CHM2A_CHICK</name>
<keyword id="KW-0007">Acetylation</keyword>
<keyword id="KW-0175">Coiled coil</keyword>
<keyword id="KW-0963">Cytoplasm</keyword>
<keyword id="KW-0967">Endosome</keyword>
<keyword id="KW-0472">Membrane</keyword>
<keyword id="KW-0653">Protein transport</keyword>
<keyword id="KW-1185">Reference proteome</keyword>
<keyword id="KW-0813">Transport</keyword>